<dbReference type="EC" id="3.1.3.5" evidence="1"/>
<dbReference type="EMBL" id="CP000879">
    <property type="protein sequence ID" value="ABX30797.1"/>
    <property type="molecule type" value="Genomic_DNA"/>
</dbReference>
<dbReference type="RefSeq" id="WP_012207904.1">
    <property type="nucleotide sequence ID" value="NC_010003.1"/>
</dbReference>
<dbReference type="SMR" id="A9BER9"/>
<dbReference type="STRING" id="403833.Pmob_0048"/>
<dbReference type="KEGG" id="pmo:Pmob_0048"/>
<dbReference type="eggNOG" id="COG0496">
    <property type="taxonomic scope" value="Bacteria"/>
</dbReference>
<dbReference type="HOGENOM" id="CLU_045192_1_3_0"/>
<dbReference type="OrthoDB" id="9780815at2"/>
<dbReference type="Proteomes" id="UP000000789">
    <property type="component" value="Chromosome"/>
</dbReference>
<dbReference type="GO" id="GO:0005737">
    <property type="term" value="C:cytoplasm"/>
    <property type="evidence" value="ECO:0007669"/>
    <property type="project" value="UniProtKB-SubCell"/>
</dbReference>
<dbReference type="GO" id="GO:0008254">
    <property type="term" value="F:3'-nucleotidase activity"/>
    <property type="evidence" value="ECO:0007669"/>
    <property type="project" value="TreeGrafter"/>
</dbReference>
<dbReference type="GO" id="GO:0008253">
    <property type="term" value="F:5'-nucleotidase activity"/>
    <property type="evidence" value="ECO:0007669"/>
    <property type="project" value="UniProtKB-UniRule"/>
</dbReference>
<dbReference type="GO" id="GO:0004309">
    <property type="term" value="F:exopolyphosphatase activity"/>
    <property type="evidence" value="ECO:0007669"/>
    <property type="project" value="TreeGrafter"/>
</dbReference>
<dbReference type="GO" id="GO:0046872">
    <property type="term" value="F:metal ion binding"/>
    <property type="evidence" value="ECO:0007669"/>
    <property type="project" value="UniProtKB-UniRule"/>
</dbReference>
<dbReference type="GO" id="GO:0000166">
    <property type="term" value="F:nucleotide binding"/>
    <property type="evidence" value="ECO:0007669"/>
    <property type="project" value="UniProtKB-KW"/>
</dbReference>
<dbReference type="FunFam" id="3.40.1210.10:FF:000001">
    <property type="entry name" value="5'/3'-nucleotidase SurE"/>
    <property type="match status" value="1"/>
</dbReference>
<dbReference type="Gene3D" id="3.40.1210.10">
    <property type="entry name" value="Survival protein SurE-like phosphatase/nucleotidase"/>
    <property type="match status" value="1"/>
</dbReference>
<dbReference type="HAMAP" id="MF_00060">
    <property type="entry name" value="SurE"/>
    <property type="match status" value="1"/>
</dbReference>
<dbReference type="InterPro" id="IPR030048">
    <property type="entry name" value="SurE"/>
</dbReference>
<dbReference type="InterPro" id="IPR002828">
    <property type="entry name" value="SurE-like_Pase/nucleotidase"/>
</dbReference>
<dbReference type="InterPro" id="IPR036523">
    <property type="entry name" value="SurE-like_sf"/>
</dbReference>
<dbReference type="NCBIfam" id="NF001490">
    <property type="entry name" value="PRK00346.1-4"/>
    <property type="match status" value="1"/>
</dbReference>
<dbReference type="NCBIfam" id="NF001492">
    <property type="entry name" value="PRK00346.2-2"/>
    <property type="match status" value="1"/>
</dbReference>
<dbReference type="NCBIfam" id="NF010545">
    <property type="entry name" value="PRK13935.1"/>
    <property type="match status" value="1"/>
</dbReference>
<dbReference type="NCBIfam" id="TIGR00087">
    <property type="entry name" value="surE"/>
    <property type="match status" value="1"/>
</dbReference>
<dbReference type="PANTHER" id="PTHR30457">
    <property type="entry name" value="5'-NUCLEOTIDASE SURE"/>
    <property type="match status" value="1"/>
</dbReference>
<dbReference type="PANTHER" id="PTHR30457:SF12">
    <property type="entry name" value="5'_3'-NUCLEOTIDASE SURE"/>
    <property type="match status" value="1"/>
</dbReference>
<dbReference type="Pfam" id="PF01975">
    <property type="entry name" value="SurE"/>
    <property type="match status" value="1"/>
</dbReference>
<dbReference type="SUPFAM" id="SSF64167">
    <property type="entry name" value="SurE-like"/>
    <property type="match status" value="1"/>
</dbReference>
<organism>
    <name type="scientific">Petrotoga mobilis (strain DSM 10674 / SJ95)</name>
    <dbReference type="NCBI Taxonomy" id="403833"/>
    <lineage>
        <taxon>Bacteria</taxon>
        <taxon>Thermotogati</taxon>
        <taxon>Thermotogota</taxon>
        <taxon>Thermotogae</taxon>
        <taxon>Petrotogales</taxon>
        <taxon>Petrotogaceae</taxon>
        <taxon>Petrotoga</taxon>
    </lineage>
</organism>
<sequence>MNILLSNDDGIMSPGIITLKTYLQQKHDVYVVAPDIERSATGHGITVRNPLWAKKVKFGDTFFGHAVNGTPADCVKIGLDAIYKDIHFDVVISGINRGANLGTDVLYSGTVSAALEGAVGGYPSIAVSCVDFSNPNFEDGAKVVLNILEKLDLNNWPEFTTLNVNIPKIPYDEMKGIKITKQSRRRYQDYFEERKDPFGNSYYWMLGNIIEDDNDDNSDYNVINQGYVAVTPLSVFMTKYDFIDELKSWLEV</sequence>
<evidence type="ECO:0000255" key="1">
    <source>
        <dbReference type="HAMAP-Rule" id="MF_00060"/>
    </source>
</evidence>
<gene>
    <name evidence="1" type="primary">surE</name>
    <name type="ordered locus">Pmob_0048</name>
</gene>
<name>SURE_PETMO</name>
<reference key="1">
    <citation type="submission" date="2007-11" db="EMBL/GenBank/DDBJ databases">
        <title>Complete sequence of Petroga mobilis SJ95.</title>
        <authorList>
            <consortium name="US DOE Joint Genome Institute"/>
            <person name="Copeland A."/>
            <person name="Lucas S."/>
            <person name="Lapidus A."/>
            <person name="Barry K."/>
            <person name="Glavina del Rio T."/>
            <person name="Dalin E."/>
            <person name="Tice H."/>
            <person name="Pitluck S."/>
            <person name="Meincke L."/>
            <person name="Brettin T."/>
            <person name="Bruce D."/>
            <person name="Detter J.C."/>
            <person name="Han C."/>
            <person name="Kuske C.R."/>
            <person name="Schmutz J."/>
            <person name="Larimer F."/>
            <person name="Land M."/>
            <person name="Hauser L."/>
            <person name="Kyrpides N."/>
            <person name="Mikhailova N."/>
            <person name="Noll K."/>
            <person name="Richardson P."/>
        </authorList>
    </citation>
    <scope>NUCLEOTIDE SEQUENCE [LARGE SCALE GENOMIC DNA]</scope>
    <source>
        <strain>DSM 10674 / SJ95</strain>
    </source>
</reference>
<proteinExistence type="inferred from homology"/>
<protein>
    <recommendedName>
        <fullName evidence="1">5'-nucleotidase SurE</fullName>
        <ecNumber evidence="1">3.1.3.5</ecNumber>
    </recommendedName>
    <alternativeName>
        <fullName evidence="1">Nucleoside 5'-monophosphate phosphohydrolase</fullName>
    </alternativeName>
</protein>
<accession>A9BER9</accession>
<comment type="function">
    <text evidence="1">Nucleotidase that shows phosphatase activity on nucleoside 5'-monophosphates.</text>
</comment>
<comment type="catalytic activity">
    <reaction evidence="1">
        <text>a ribonucleoside 5'-phosphate + H2O = a ribonucleoside + phosphate</text>
        <dbReference type="Rhea" id="RHEA:12484"/>
        <dbReference type="ChEBI" id="CHEBI:15377"/>
        <dbReference type="ChEBI" id="CHEBI:18254"/>
        <dbReference type="ChEBI" id="CHEBI:43474"/>
        <dbReference type="ChEBI" id="CHEBI:58043"/>
        <dbReference type="EC" id="3.1.3.5"/>
    </reaction>
</comment>
<comment type="cofactor">
    <cofactor evidence="1">
        <name>a divalent metal cation</name>
        <dbReference type="ChEBI" id="CHEBI:60240"/>
    </cofactor>
    <text evidence="1">Binds 1 divalent metal cation per subunit.</text>
</comment>
<comment type="subcellular location">
    <subcellularLocation>
        <location evidence="1">Cytoplasm</location>
    </subcellularLocation>
</comment>
<comment type="similarity">
    <text evidence="1">Belongs to the SurE nucleotidase family.</text>
</comment>
<feature type="chain" id="PRO_1000075035" description="5'-nucleotidase SurE">
    <location>
        <begin position="1"/>
        <end position="252"/>
    </location>
</feature>
<feature type="binding site" evidence="1">
    <location>
        <position position="8"/>
    </location>
    <ligand>
        <name>a divalent metal cation</name>
        <dbReference type="ChEBI" id="CHEBI:60240"/>
    </ligand>
</feature>
<feature type="binding site" evidence="1">
    <location>
        <position position="9"/>
    </location>
    <ligand>
        <name>a divalent metal cation</name>
        <dbReference type="ChEBI" id="CHEBI:60240"/>
    </ligand>
</feature>
<feature type="binding site" evidence="1">
    <location>
        <position position="39"/>
    </location>
    <ligand>
        <name>a divalent metal cation</name>
        <dbReference type="ChEBI" id="CHEBI:60240"/>
    </ligand>
</feature>
<feature type="binding site" evidence="1">
    <location>
        <position position="96"/>
    </location>
    <ligand>
        <name>a divalent metal cation</name>
        <dbReference type="ChEBI" id="CHEBI:60240"/>
    </ligand>
</feature>
<keyword id="KW-0963">Cytoplasm</keyword>
<keyword id="KW-0378">Hydrolase</keyword>
<keyword id="KW-0479">Metal-binding</keyword>
<keyword id="KW-0547">Nucleotide-binding</keyword>